<accession>P69054</accession>
<accession>P10446</accession>
<keyword id="KW-0002">3D-structure</keyword>
<keyword id="KW-0997">Cell inner membrane</keyword>
<keyword id="KW-1003">Cell membrane</keyword>
<keyword id="KW-0903">Direct protein sequencing</keyword>
<keyword id="KW-0249">Electron transport</keyword>
<keyword id="KW-0349">Heme</keyword>
<keyword id="KW-0408">Iron</keyword>
<keyword id="KW-0472">Membrane</keyword>
<keyword id="KW-0479">Metal-binding</keyword>
<keyword id="KW-1185">Reference proteome</keyword>
<keyword id="KW-0812">Transmembrane</keyword>
<keyword id="KW-1133">Transmembrane helix</keyword>
<keyword id="KW-0813">Transport</keyword>
<keyword id="KW-0816">Tricarboxylic acid cycle</keyword>
<sequence length="129" mass="14299">MIRNVKKQRPVNLDLQTIRFPITAIASILHRVSGVITFVAVGILLWLLGTSLSSPEGFEQASAIMGSFFVKFIMWGILTALAYHVVVGIRHMMMDFGYLEETFEAGKRSAKISFVITVVLSLLAGVLVW</sequence>
<dbReference type="EMBL" id="J01619">
    <property type="protein sequence ID" value="AAA23893.1"/>
    <property type="molecule type" value="Genomic_DNA"/>
</dbReference>
<dbReference type="EMBL" id="M28989">
    <property type="protein sequence ID" value="AAA24616.1"/>
    <property type="molecule type" value="Genomic_DNA"/>
</dbReference>
<dbReference type="EMBL" id="X00980">
    <property type="protein sequence ID" value="CAA25485.1"/>
    <property type="molecule type" value="Genomic_DNA"/>
</dbReference>
<dbReference type="EMBL" id="U00096">
    <property type="protein sequence ID" value="AAC73815.1"/>
    <property type="molecule type" value="Genomic_DNA"/>
</dbReference>
<dbReference type="EMBL" id="AP009048">
    <property type="protein sequence ID" value="BAA35388.1"/>
    <property type="molecule type" value="Genomic_DNA"/>
</dbReference>
<dbReference type="PIR" id="A28836">
    <property type="entry name" value="DEECS4"/>
</dbReference>
<dbReference type="RefSeq" id="NP_415249.1">
    <property type="nucleotide sequence ID" value="NC_000913.3"/>
</dbReference>
<dbReference type="PDB" id="1NEK">
    <property type="method" value="X-ray"/>
    <property type="resolution" value="2.60 A"/>
    <property type="chains" value="C=1-129"/>
</dbReference>
<dbReference type="PDB" id="1NEN">
    <property type="method" value="X-ray"/>
    <property type="resolution" value="2.90 A"/>
    <property type="chains" value="C=1-129"/>
</dbReference>
<dbReference type="PDB" id="2ACZ">
    <property type="method" value="X-ray"/>
    <property type="resolution" value="3.10 A"/>
    <property type="chains" value="C=1-129"/>
</dbReference>
<dbReference type="PDB" id="2WDQ">
    <property type="method" value="X-ray"/>
    <property type="resolution" value="2.40 A"/>
    <property type="chains" value="C/G/K=1-129"/>
</dbReference>
<dbReference type="PDB" id="2WDR">
    <property type="method" value="X-ray"/>
    <property type="resolution" value="3.20 A"/>
    <property type="chains" value="C/G/K=1-129"/>
</dbReference>
<dbReference type="PDB" id="2WDV">
    <property type="method" value="X-ray"/>
    <property type="resolution" value="3.20 A"/>
    <property type="chains" value="C/G/K=1-129"/>
</dbReference>
<dbReference type="PDB" id="2WP9">
    <property type="method" value="X-ray"/>
    <property type="resolution" value="2.70 A"/>
    <property type="chains" value="C/G/K=1-129"/>
</dbReference>
<dbReference type="PDB" id="2WS3">
    <property type="method" value="X-ray"/>
    <property type="resolution" value="3.20 A"/>
    <property type="chains" value="C/G/K=1-129"/>
</dbReference>
<dbReference type="PDB" id="2WU2">
    <property type="method" value="X-ray"/>
    <property type="resolution" value="2.50 A"/>
    <property type="chains" value="C/G/K=1-129"/>
</dbReference>
<dbReference type="PDB" id="2WU5">
    <property type="method" value="X-ray"/>
    <property type="resolution" value="2.80 A"/>
    <property type="chains" value="C/G/K=1-129"/>
</dbReference>
<dbReference type="PDB" id="6WU6">
    <property type="method" value="EM"/>
    <property type="resolution" value="3.60 A"/>
    <property type="chains" value="C/G/K=1-129"/>
</dbReference>
<dbReference type="PDB" id="7JZ2">
    <property type="method" value="EM"/>
    <property type="resolution" value="2.50 A"/>
    <property type="chains" value="C/G/K=1-129"/>
</dbReference>
<dbReference type="PDBsum" id="1NEK"/>
<dbReference type="PDBsum" id="1NEN"/>
<dbReference type="PDBsum" id="2ACZ"/>
<dbReference type="PDBsum" id="2WDQ"/>
<dbReference type="PDBsum" id="2WDR"/>
<dbReference type="PDBsum" id="2WDV"/>
<dbReference type="PDBsum" id="2WP9"/>
<dbReference type="PDBsum" id="2WS3"/>
<dbReference type="PDBsum" id="2WU2"/>
<dbReference type="PDBsum" id="2WU5"/>
<dbReference type="PDBsum" id="6WU6"/>
<dbReference type="PDBsum" id="7JZ2"/>
<dbReference type="EMDB" id="EMD-22528"/>
<dbReference type="SMR" id="P69054"/>
<dbReference type="BioGRID" id="4259942">
    <property type="interactions" value="36"/>
</dbReference>
<dbReference type="BioGRID" id="849692">
    <property type="interactions" value="1"/>
</dbReference>
<dbReference type="ComplexPortal" id="CPX-1931">
    <property type="entry name" value="Respiratory chain complex II"/>
</dbReference>
<dbReference type="DIP" id="DIP-10837N"/>
<dbReference type="FunCoup" id="P69054">
    <property type="interactions" value="253"/>
</dbReference>
<dbReference type="IntAct" id="P69054">
    <property type="interactions" value="4"/>
</dbReference>
<dbReference type="STRING" id="511145.b0721"/>
<dbReference type="DrugBank" id="DB07671">
    <property type="generic name" value="2-[1-METHYLHEXYL]-4,6-DINITROPHENOL"/>
</dbReference>
<dbReference type="DrugBank" id="DB04631">
    <property type="generic name" value="Atpenin A5"/>
</dbReference>
<dbReference type="DrugBank" id="DB08690">
    <property type="generic name" value="Ubiquinone Q2"/>
</dbReference>
<dbReference type="jPOST" id="P69054"/>
<dbReference type="PaxDb" id="511145-b0721"/>
<dbReference type="EnsemblBacteria" id="AAC73815">
    <property type="protein sequence ID" value="AAC73815"/>
    <property type="gene ID" value="b0721"/>
</dbReference>
<dbReference type="GeneID" id="945316"/>
<dbReference type="KEGG" id="ecj:JW0711"/>
<dbReference type="KEGG" id="eco:b0721"/>
<dbReference type="PATRIC" id="fig|511145.12.peg.751"/>
<dbReference type="EchoBASE" id="EB0926"/>
<dbReference type="eggNOG" id="COG2009">
    <property type="taxonomic scope" value="Bacteria"/>
</dbReference>
<dbReference type="HOGENOM" id="CLU_094691_2_1_6"/>
<dbReference type="InParanoid" id="P69054"/>
<dbReference type="OMA" id="YHLVAGI"/>
<dbReference type="OrthoDB" id="9799441at2"/>
<dbReference type="PhylomeDB" id="P69054"/>
<dbReference type="BioCyc" id="EcoCyc:SDH-MEMB1"/>
<dbReference type="BioCyc" id="MetaCyc:SDH-MEMB1"/>
<dbReference type="UniPathway" id="UPA00223"/>
<dbReference type="EvolutionaryTrace" id="P69054"/>
<dbReference type="PHI-base" id="PHI:7962"/>
<dbReference type="PRO" id="PR:P69054"/>
<dbReference type="Proteomes" id="UP000000625">
    <property type="component" value="Chromosome"/>
</dbReference>
<dbReference type="GO" id="GO:0016020">
    <property type="term" value="C:membrane"/>
    <property type="evidence" value="ECO:0000303"/>
    <property type="project" value="ComplexPortal"/>
</dbReference>
<dbReference type="GO" id="GO:0005886">
    <property type="term" value="C:plasma membrane"/>
    <property type="evidence" value="ECO:0000314"/>
    <property type="project" value="EcoCyc"/>
</dbReference>
<dbReference type="GO" id="GO:0009055">
    <property type="term" value="F:electron transfer activity"/>
    <property type="evidence" value="ECO:0000314"/>
    <property type="project" value="EcoCyc"/>
</dbReference>
<dbReference type="GO" id="GO:0020037">
    <property type="term" value="F:heme binding"/>
    <property type="evidence" value="ECO:0000315"/>
    <property type="project" value="EcoCyc"/>
</dbReference>
<dbReference type="GO" id="GO:0046872">
    <property type="term" value="F:metal ion binding"/>
    <property type="evidence" value="ECO:0007669"/>
    <property type="project" value="UniProtKB-KW"/>
</dbReference>
<dbReference type="GO" id="GO:0008177">
    <property type="term" value="F:succinate dehydrogenase (quinone) activity"/>
    <property type="evidence" value="ECO:0000315"/>
    <property type="project" value="EcoliWiki"/>
</dbReference>
<dbReference type="GO" id="GO:0048039">
    <property type="term" value="F:ubiquinone binding"/>
    <property type="evidence" value="ECO:0000314"/>
    <property type="project" value="EcoliWiki"/>
</dbReference>
<dbReference type="GO" id="GO:0019646">
    <property type="term" value="P:aerobic electron transport chain"/>
    <property type="evidence" value="ECO:0000303"/>
    <property type="project" value="ComplexPortal"/>
</dbReference>
<dbReference type="GO" id="GO:0009060">
    <property type="term" value="P:aerobic respiration"/>
    <property type="evidence" value="ECO:0000270"/>
    <property type="project" value="EcoCyc"/>
</dbReference>
<dbReference type="GO" id="GO:0017004">
    <property type="term" value="P:cytochrome complex assembly"/>
    <property type="evidence" value="ECO:0000315"/>
    <property type="project" value="EcoCyc"/>
</dbReference>
<dbReference type="GO" id="GO:0006099">
    <property type="term" value="P:tricarboxylic acid cycle"/>
    <property type="evidence" value="ECO:0007669"/>
    <property type="project" value="UniProtKB-UniPathway"/>
</dbReference>
<dbReference type="CDD" id="cd03499">
    <property type="entry name" value="SQR_TypeC_SdhC"/>
    <property type="match status" value="1"/>
</dbReference>
<dbReference type="FunFam" id="1.20.1300.10:FF:000005">
    <property type="entry name" value="Succinate dehydrogenase cytochrome b556 subunit"/>
    <property type="match status" value="1"/>
</dbReference>
<dbReference type="Gene3D" id="1.20.1300.10">
    <property type="entry name" value="Fumarate reductase/succinate dehydrogenase, transmembrane subunit"/>
    <property type="match status" value="1"/>
</dbReference>
<dbReference type="InterPro" id="IPR034804">
    <property type="entry name" value="SQR/QFR_C/D"/>
</dbReference>
<dbReference type="InterPro" id="IPR018495">
    <property type="entry name" value="Succ_DH_cyt_bsu_CS"/>
</dbReference>
<dbReference type="InterPro" id="IPR014314">
    <property type="entry name" value="Succ_DH_cytb556"/>
</dbReference>
<dbReference type="InterPro" id="IPR000701">
    <property type="entry name" value="SuccDH_FuR_B_TM-su"/>
</dbReference>
<dbReference type="NCBIfam" id="NF007021">
    <property type="entry name" value="PRK09487.1"/>
    <property type="match status" value="1"/>
</dbReference>
<dbReference type="NCBIfam" id="TIGR02970">
    <property type="entry name" value="succ_dehyd_cytB"/>
    <property type="match status" value="1"/>
</dbReference>
<dbReference type="PANTHER" id="PTHR10978">
    <property type="entry name" value="SUCCINATE DEHYDROGENASE CYTOCHROME B560 SUBUNIT"/>
    <property type="match status" value="1"/>
</dbReference>
<dbReference type="PANTHER" id="PTHR10978:SF5">
    <property type="entry name" value="SUCCINATE DEHYDROGENASE CYTOCHROME B560 SUBUNIT, MITOCHONDRIAL"/>
    <property type="match status" value="1"/>
</dbReference>
<dbReference type="Pfam" id="PF01127">
    <property type="entry name" value="Sdh_cyt"/>
    <property type="match status" value="1"/>
</dbReference>
<dbReference type="PIRSF" id="PIRSF000178">
    <property type="entry name" value="SDH_cyt_b560"/>
    <property type="match status" value="1"/>
</dbReference>
<dbReference type="SUPFAM" id="SSF81343">
    <property type="entry name" value="Fumarate reductase respiratory complex transmembrane subunits"/>
    <property type="match status" value="1"/>
</dbReference>
<dbReference type="PROSITE" id="PS01000">
    <property type="entry name" value="SDH_CYT_1"/>
    <property type="match status" value="1"/>
</dbReference>
<dbReference type="PROSITE" id="PS01001">
    <property type="entry name" value="SDH_CYT_2"/>
    <property type="match status" value="1"/>
</dbReference>
<name>DHSC_ECOLI</name>
<protein>
    <recommendedName>
        <fullName>Succinate dehydrogenase cytochrome b556 subunit</fullName>
        <shortName>Cytochrome b-556</shortName>
    </recommendedName>
</protein>
<feature type="chain" id="PRO_0000203510" description="Succinate dehydrogenase cytochrome b556 subunit">
    <location>
        <begin position="1"/>
        <end position="129"/>
    </location>
</feature>
<feature type="topological domain" description="Cytoplasmic" evidence="5">
    <location>
        <begin position="1"/>
        <end position="26"/>
    </location>
</feature>
<feature type="transmembrane region" description="Helical">
    <location>
        <begin position="27"/>
        <end position="52"/>
    </location>
</feature>
<feature type="topological domain" description="Periplasmic" evidence="5">
    <location>
        <begin position="53"/>
        <end position="68"/>
    </location>
</feature>
<feature type="transmembrane region" description="Helical">
    <location>
        <begin position="69"/>
        <end position="89"/>
    </location>
</feature>
<feature type="topological domain" description="Cytoplasmic" evidence="5">
    <location>
        <begin position="90"/>
        <end position="108"/>
    </location>
</feature>
<feature type="transmembrane region" description="Helical">
    <location>
        <begin position="109"/>
        <end position="129"/>
    </location>
</feature>
<feature type="binding site" description="axial binding residue">
    <location>
        <position position="84"/>
    </location>
    <ligand>
        <name>heme</name>
        <dbReference type="ChEBI" id="CHEBI:30413"/>
        <note>ligand shared with second transmembrane subunit</note>
    </ligand>
    <ligandPart>
        <name>Fe</name>
        <dbReference type="ChEBI" id="CHEBI:18248"/>
    </ligandPart>
</feature>
<feature type="helix" evidence="6">
    <location>
        <begin position="15"/>
        <end position="17"/>
    </location>
</feature>
<feature type="helix" evidence="6">
    <location>
        <begin position="22"/>
        <end position="52"/>
    </location>
</feature>
<feature type="helix" evidence="6">
    <location>
        <begin position="55"/>
        <end position="66"/>
    </location>
</feature>
<feature type="helix" evidence="6">
    <location>
        <begin position="68"/>
        <end position="95"/>
    </location>
</feature>
<feature type="helix" evidence="6">
    <location>
        <begin position="103"/>
        <end position="126"/>
    </location>
</feature>
<organism>
    <name type="scientific">Escherichia coli (strain K12)</name>
    <dbReference type="NCBI Taxonomy" id="83333"/>
    <lineage>
        <taxon>Bacteria</taxon>
        <taxon>Pseudomonadati</taxon>
        <taxon>Pseudomonadota</taxon>
        <taxon>Gammaproteobacteria</taxon>
        <taxon>Enterobacterales</taxon>
        <taxon>Enterobacteriaceae</taxon>
        <taxon>Escherichia</taxon>
    </lineage>
</organism>
<gene>
    <name type="primary">sdhC</name>
    <name type="synonym">cybA</name>
    <name type="ordered locus">b0721</name>
    <name type="ordered locus">JW0711</name>
</gene>
<proteinExistence type="evidence at protein level"/>
<comment type="function">
    <text>Membrane-anchoring subunit of succinate dehydrogenase (SDH).</text>
</comment>
<comment type="cofactor">
    <cofactor>
        <name>heme</name>
        <dbReference type="ChEBI" id="CHEBI:30413"/>
    </cofactor>
    <text>The heme is bound between the two transmembrane subunits.</text>
</comment>
<comment type="pathway">
    <text>Carbohydrate metabolism; tricarboxylic acid cycle.</text>
</comment>
<comment type="subunit">
    <text evidence="1 2 3">Part of an enzyme complex containing four subunits: a flavoprotein, an iron-sulfur protein, plus two membrane-anchoring proteins, SdhC and SdhD. The complex can form homotrimers.</text>
</comment>
<comment type="subcellular location">
    <subcellularLocation>
        <location>Cell inner membrane</location>
        <topology>Multi-pass membrane protein</topology>
    </subcellularLocation>
</comment>
<comment type="miscellaneous">
    <text>His-84 provides an axial ligand to heme b556 in the wild-type enzyme. The retention of low spin heme b556 in the SdhC 'Leu-84' mutant suggests that swapping of the heme axial ligand by His-91 or His-30 is possible.</text>
</comment>
<comment type="similarity">
    <text evidence="4">Belongs to the cytochrome b560 family.</text>
</comment>
<reference key="1">
    <citation type="journal article" date="1984" name="Biochem. J.">
        <title>Nucleotide sequence encoding the flavoprotein and hydrophobic subunits of the succinate dehydrogenase of Escherichia coli.</title>
        <authorList>
            <person name="Wood D."/>
            <person name="Darlison M.G."/>
            <person name="Wilde R.J."/>
            <person name="Guest J.R."/>
        </authorList>
    </citation>
    <scope>NUCLEOTIDE SEQUENCE [GENOMIC DNA]</scope>
    <source>
        <strain>K12</strain>
    </source>
</reference>
<reference key="2">
    <citation type="journal article" date="1986" name="J. Gen. Microbiol.">
        <title>Transcript analysis of the citrate synthase and succinate dehydrogenase genes of Escherichia coli K12.</title>
        <authorList>
            <person name="Wilde R.J."/>
            <person name="Guest J.R."/>
        </authorList>
    </citation>
    <scope>NUCLEOTIDE SEQUENCE [GENOMIC DNA]</scope>
    <source>
        <strain>K12</strain>
    </source>
</reference>
<reference key="3">
    <citation type="journal article" date="1996" name="DNA Res.">
        <title>A 718-kb DNA sequence of the Escherichia coli K-12 genome corresponding to the 12.7-28.0 min region on the linkage map.</title>
        <authorList>
            <person name="Oshima T."/>
            <person name="Aiba H."/>
            <person name="Baba T."/>
            <person name="Fujita K."/>
            <person name="Hayashi K."/>
            <person name="Honjo A."/>
            <person name="Ikemoto K."/>
            <person name="Inada T."/>
            <person name="Itoh T."/>
            <person name="Kajihara M."/>
            <person name="Kanai K."/>
            <person name="Kashimoto K."/>
            <person name="Kimura S."/>
            <person name="Kitagawa M."/>
            <person name="Makino K."/>
            <person name="Masuda S."/>
            <person name="Miki T."/>
            <person name="Mizobuchi K."/>
            <person name="Mori H."/>
            <person name="Motomura K."/>
            <person name="Nakamura Y."/>
            <person name="Nashimoto H."/>
            <person name="Nishio Y."/>
            <person name="Saito N."/>
            <person name="Sampei G."/>
            <person name="Seki Y."/>
            <person name="Tagami H."/>
            <person name="Takemoto K."/>
            <person name="Wada C."/>
            <person name="Yamamoto Y."/>
            <person name="Yano M."/>
            <person name="Horiuchi T."/>
        </authorList>
    </citation>
    <scope>NUCLEOTIDE SEQUENCE [LARGE SCALE GENOMIC DNA]</scope>
    <source>
        <strain>K12 / W3110 / ATCC 27325 / DSM 5911</strain>
    </source>
</reference>
<reference key="4">
    <citation type="journal article" date="1997" name="Science">
        <title>The complete genome sequence of Escherichia coli K-12.</title>
        <authorList>
            <person name="Blattner F.R."/>
            <person name="Plunkett G. III"/>
            <person name="Bloch C.A."/>
            <person name="Perna N.T."/>
            <person name="Burland V."/>
            <person name="Riley M."/>
            <person name="Collado-Vides J."/>
            <person name="Glasner J.D."/>
            <person name="Rode C.K."/>
            <person name="Mayhew G.F."/>
            <person name="Gregor J."/>
            <person name="Davis N.W."/>
            <person name="Kirkpatrick H.A."/>
            <person name="Goeden M.A."/>
            <person name="Rose D.J."/>
            <person name="Mau B."/>
            <person name="Shao Y."/>
        </authorList>
    </citation>
    <scope>NUCLEOTIDE SEQUENCE [LARGE SCALE GENOMIC DNA]</scope>
    <source>
        <strain>K12 / MG1655 / ATCC 47076</strain>
    </source>
</reference>
<reference key="5">
    <citation type="journal article" date="2006" name="Mol. Syst. Biol.">
        <title>Highly accurate genome sequences of Escherichia coli K-12 strains MG1655 and W3110.</title>
        <authorList>
            <person name="Hayashi K."/>
            <person name="Morooka N."/>
            <person name="Yamamoto Y."/>
            <person name="Fujita K."/>
            <person name="Isono K."/>
            <person name="Choi S."/>
            <person name="Ohtsubo E."/>
            <person name="Baba T."/>
            <person name="Wanner B.L."/>
            <person name="Mori H."/>
            <person name="Horiuchi T."/>
        </authorList>
    </citation>
    <scope>NUCLEOTIDE SEQUENCE [LARGE SCALE GENOMIC DNA]</scope>
    <source>
        <strain>K12 / W3110 / ATCC 27325 / DSM 5911</strain>
    </source>
</reference>
<reference key="6">
    <citation type="journal article" date="1998" name="J. Biol. Chem.">
        <title>The quinone-binding site in succinate-ubiquinone reductase from Escherichia coli. Quinone-binding domain and amino acid residues involved in quinone binding.</title>
        <authorList>
            <person name="Yang X."/>
            <person name="Yu L."/>
            <person name="He D."/>
            <person name="Yu C.-A."/>
        </authorList>
    </citation>
    <scope>PROTEIN SEQUENCE OF 17-33</scope>
    <scope>MUTAGENESIS</scope>
    <source>
        <strain>K12</strain>
    </source>
</reference>
<reference key="7">
    <citation type="journal article" date="1985" name="FEMS Microbiol. Lett.">
        <title>The Escherichia coli cytochrome b556 gene, cybA is assignable as sdhC in the succinate dehydrogenase gene cluster.</title>
        <authorList>
            <person name="Murakami H."/>
            <person name="Kika K."/>
            <person name="Oya H."/>
            <person name="Anraku Y."/>
        </authorList>
    </citation>
    <scope>IDENTIFICATION OF PROTEIN</scope>
</reference>
<reference key="8">
    <citation type="journal article" date="1998" name="Biochemistry">
        <title>Localization of histidine residues responsible for heme axial ligation in cytochrome b556 of complex II (succinate:ubiquinone oxidoreductase) in Escherichia coli.</title>
        <authorList>
            <person name="Vibat C.R."/>
            <person name="Cecchini G."/>
            <person name="Nakamura K."/>
            <person name="Kita K."/>
            <person name="Gennis R.B."/>
        </authorList>
    </citation>
    <scope>MUTAGENESIS OF HISTIDINE RESIDUES</scope>
</reference>
<reference key="9">
    <citation type="journal article" date="2001" name="J. Biol. Chem.">
        <title>Retention of heme in axial ligand mutants of succinate-ubiquinone oxidoreductase (complex II) from Escherichia coli.</title>
        <authorList>
            <person name="Maklashina E."/>
            <person name="Rothery R.A."/>
            <person name="Weiner J.H."/>
            <person name="Cecchini G."/>
        </authorList>
    </citation>
    <scope>MUTAGENESIS OF HISTIDINE RESIDUES</scope>
</reference>
<reference key="10">
    <citation type="journal article" date="2005" name="Science">
        <title>Global topology analysis of the Escherichia coli inner membrane proteome.</title>
        <authorList>
            <person name="Daley D.O."/>
            <person name="Rapp M."/>
            <person name="Granseth E."/>
            <person name="Melen K."/>
            <person name="Drew D."/>
            <person name="von Heijne G."/>
        </authorList>
    </citation>
    <scope>TOPOLOGY [LARGE SCALE ANALYSIS]</scope>
    <source>
        <strain>K12 / MG1655 / ATCC 47076</strain>
    </source>
</reference>
<reference key="11">
    <citation type="journal article" date="2003" name="Science">
        <title>Architecture of succinate dehydrogenase and reactive oxygen species generation.</title>
        <authorList>
            <person name="Yankovskaya V."/>
            <person name="Horsefield R."/>
            <person name="Toernroth S."/>
            <person name="Luna-Chavez C."/>
            <person name="Miyoshi H."/>
            <person name="Leger C."/>
            <person name="Byrne B."/>
            <person name="Cecchini G."/>
            <person name="Iwata S."/>
        </authorList>
    </citation>
    <scope>X-RAY CRYSTALLOGRAPHY (2.6 ANGSTROMS) IN COMPLEX WITH HEME</scope>
    <scope>TRANSMEMBRANE TOPOLOGY</scope>
    <scope>SUBUNIT</scope>
</reference>
<reference key="12">
    <citation type="journal article" date="2006" name="J. Biol. Chem.">
        <title>Structural and computational analysis of the quinone-binding site of complex II (succinate-ubiquinone oxidoreductase): a mechanism of electron transfer and proton conduction during ubiquinone reduction.</title>
        <authorList>
            <person name="Horsefield R."/>
            <person name="Yankovskaya V."/>
            <person name="Sexton G."/>
            <person name="Whittingham W."/>
            <person name="Shiomi K."/>
            <person name="Omura S."/>
            <person name="Byrne B."/>
            <person name="Cecchini G."/>
            <person name="Iwata S."/>
        </authorList>
    </citation>
    <scope>X-RAY CRYSTALLOGRAPHY (3.1 ANGSTROMS) IN COMPLEX WITH HEME</scope>
    <scope>TRANSMEMBRANE TOPOLOGY</scope>
    <scope>SUBUNIT</scope>
</reference>
<reference key="13">
    <citation type="journal article" date="2009" name="J. Biol. Chem.">
        <title>Structure of Escherichia coli succinate:quinone oxidoreductase with an occupied and empty quinone-binding site.</title>
        <authorList>
            <person name="Ruprecht J."/>
            <person name="Yankovskaya V."/>
            <person name="Maklashina E."/>
            <person name="Iwata S."/>
            <person name="Cecchini G."/>
        </authorList>
    </citation>
    <scope>X-RAY CRYSTALLOGRAPHY (2.4 ANGSTROMS) IN COMPLEX WITH HEME</scope>
    <scope>TRANSMEMBRANE TOPOLOGY</scope>
    <scope>SUBUNIT</scope>
</reference>
<evidence type="ECO:0000269" key="1">
    <source>
    </source>
</evidence>
<evidence type="ECO:0000269" key="2">
    <source>
    </source>
</evidence>
<evidence type="ECO:0000269" key="3">
    <source>
    </source>
</evidence>
<evidence type="ECO:0000305" key="4"/>
<evidence type="ECO:0000305" key="5">
    <source>
    </source>
</evidence>
<evidence type="ECO:0007829" key="6">
    <source>
        <dbReference type="PDB" id="2WDQ"/>
    </source>
</evidence>